<protein>
    <recommendedName>
        <fullName evidence="6">A-kinase anchor protein 2</fullName>
        <shortName>AKAP-2</shortName>
    </recommendedName>
</protein>
<keyword id="KW-1003">Cell membrane</keyword>
<keyword id="KW-0175">Coiled coil</keyword>
<keyword id="KW-0325">Glycoprotein</keyword>
<keyword id="KW-0336">GPI-anchor</keyword>
<keyword id="KW-1017">Isopeptide bond</keyword>
<keyword id="KW-0449">Lipoprotein</keyword>
<keyword id="KW-0472">Membrane</keyword>
<keyword id="KW-0597">Phosphoprotein</keyword>
<keyword id="KW-1185">Reference proteome</keyword>
<keyword id="KW-0832">Ubl conjugation</keyword>
<dbReference type="EMBL" id="BC085790">
    <property type="protein sequence ID" value="AAH85790.1"/>
    <property type="molecule type" value="mRNA"/>
</dbReference>
<dbReference type="BioGRID" id="255737">
    <property type="interactions" value="1"/>
</dbReference>
<dbReference type="CORUM" id="Q5U301"/>
<dbReference type="FunCoup" id="Q5U301">
    <property type="interactions" value="154"/>
</dbReference>
<dbReference type="STRING" id="10116.ENSRNOP00000015576"/>
<dbReference type="GlyGen" id="Q5U301">
    <property type="glycosylation" value="1 site"/>
</dbReference>
<dbReference type="iPTMnet" id="Q5U301"/>
<dbReference type="PhosphoSitePlus" id="Q5U301"/>
<dbReference type="PaxDb" id="10116-ENSRNOP00000015576"/>
<dbReference type="PeptideAtlas" id="Q5U301"/>
<dbReference type="UCSC" id="RGD:1305135">
    <property type="organism name" value="rat"/>
</dbReference>
<dbReference type="AGR" id="RGD:1305135"/>
<dbReference type="RGD" id="1305135">
    <property type="gene designation" value="Akap2"/>
</dbReference>
<dbReference type="eggNOG" id="ENOG502QR7I">
    <property type="taxonomic scope" value="Eukaryota"/>
</dbReference>
<dbReference type="InParanoid" id="Q5U301"/>
<dbReference type="PRO" id="PR:Q5U301"/>
<dbReference type="Proteomes" id="UP000002494">
    <property type="component" value="Unplaced"/>
</dbReference>
<dbReference type="GO" id="GO:0016324">
    <property type="term" value="C:apical plasma membrane"/>
    <property type="evidence" value="ECO:0007669"/>
    <property type="project" value="UniProtKB-SubCell"/>
</dbReference>
<dbReference type="GO" id="GO:0032991">
    <property type="term" value="C:protein-containing complex"/>
    <property type="evidence" value="ECO:0000314"/>
    <property type="project" value="RGD"/>
</dbReference>
<dbReference type="GO" id="GO:0098552">
    <property type="term" value="C:side of membrane"/>
    <property type="evidence" value="ECO:0007669"/>
    <property type="project" value="UniProtKB-KW"/>
</dbReference>
<dbReference type="GO" id="GO:0019904">
    <property type="term" value="F:protein domain specific binding"/>
    <property type="evidence" value="ECO:0000353"/>
    <property type="project" value="RGD"/>
</dbReference>
<dbReference type="GO" id="GO:0051018">
    <property type="term" value="F:protein kinase A binding"/>
    <property type="evidence" value="ECO:0000266"/>
    <property type="project" value="RGD"/>
</dbReference>
<dbReference type="GO" id="GO:0044877">
    <property type="term" value="F:protein-containing complex binding"/>
    <property type="evidence" value="ECO:0000314"/>
    <property type="project" value="RGD"/>
</dbReference>
<dbReference type="GO" id="GO:0007015">
    <property type="term" value="P:actin filament organization"/>
    <property type="evidence" value="ECO:0000266"/>
    <property type="project" value="RGD"/>
</dbReference>
<dbReference type="GO" id="GO:0007178">
    <property type="term" value="P:cell surface receptor protein serine/threonine kinase signaling pathway"/>
    <property type="evidence" value="ECO:0000266"/>
    <property type="project" value="RGD"/>
</dbReference>
<dbReference type="GO" id="GO:0008104">
    <property type="term" value="P:protein localization"/>
    <property type="evidence" value="ECO:0000266"/>
    <property type="project" value="RGD"/>
</dbReference>
<dbReference type="InterPro" id="IPR029304">
    <property type="entry name" value="AKAP2_C"/>
</dbReference>
<dbReference type="PANTHER" id="PTHR10498:SF10">
    <property type="entry name" value="PALM2 AND AKAP2 FUSION-RELATED"/>
    <property type="match status" value="1"/>
</dbReference>
<dbReference type="PANTHER" id="PTHR10498">
    <property type="entry name" value="PARALEMMIN-RELATED"/>
    <property type="match status" value="1"/>
</dbReference>
<dbReference type="Pfam" id="PF15304">
    <property type="entry name" value="AKAP2_C"/>
    <property type="match status" value="1"/>
</dbReference>
<accession>Q5U301</accession>
<evidence type="ECO:0000250" key="1"/>
<evidence type="ECO:0000250" key="2">
    <source>
        <dbReference type="UniProtKB" id="O54931"/>
    </source>
</evidence>
<evidence type="ECO:0000250" key="3">
    <source>
        <dbReference type="UniProtKB" id="Q9Y2D5"/>
    </source>
</evidence>
<evidence type="ECO:0000255" key="4"/>
<evidence type="ECO:0000256" key="5">
    <source>
        <dbReference type="SAM" id="MobiDB-lite"/>
    </source>
</evidence>
<evidence type="ECO:0000305" key="6"/>
<evidence type="ECO:0000312" key="7">
    <source>
        <dbReference type="RGD" id="1305135"/>
    </source>
</evidence>
<evidence type="ECO:0007744" key="8">
    <source>
    </source>
</evidence>
<evidence type="ECO:0007744" key="9">
    <source>
    </source>
</evidence>
<gene>
    <name evidence="7" type="primary">Akap2</name>
</gene>
<organism>
    <name type="scientific">Rattus norvegicus</name>
    <name type="common">Rat</name>
    <dbReference type="NCBI Taxonomy" id="10116"/>
    <lineage>
        <taxon>Eukaryota</taxon>
        <taxon>Metazoa</taxon>
        <taxon>Chordata</taxon>
        <taxon>Craniata</taxon>
        <taxon>Vertebrata</taxon>
        <taxon>Euteleostomi</taxon>
        <taxon>Mammalia</taxon>
        <taxon>Eutheria</taxon>
        <taxon>Euarchontoglires</taxon>
        <taxon>Glires</taxon>
        <taxon>Rodentia</taxon>
        <taxon>Myomorpha</taxon>
        <taxon>Muroidea</taxon>
        <taxon>Muridae</taxon>
        <taxon>Murinae</taxon>
        <taxon>Rattus</taxon>
    </lineage>
</organism>
<name>AKAP2_RAT</name>
<feature type="chain" id="PRO_0000380090" description="A-kinase anchor protein 2">
    <location>
        <begin position="1"/>
        <end position="870"/>
    </location>
</feature>
<feature type="region of interest" description="Disordered" evidence="5">
    <location>
        <begin position="14"/>
        <end position="43"/>
    </location>
</feature>
<feature type="region of interest" description="Disordered" evidence="5">
    <location>
        <begin position="103"/>
        <end position="165"/>
    </location>
</feature>
<feature type="region of interest" description="Disordered" evidence="5">
    <location>
        <begin position="233"/>
        <end position="324"/>
    </location>
</feature>
<feature type="region of interest" description="Disordered" evidence="5">
    <location>
        <begin position="409"/>
        <end position="436"/>
    </location>
</feature>
<feature type="region of interest" description="Disordered" evidence="5">
    <location>
        <begin position="506"/>
        <end position="577"/>
    </location>
</feature>
<feature type="region of interest" description="PKA-RII subunit binding domain" evidence="1">
    <location>
        <begin position="576"/>
        <end position="589"/>
    </location>
</feature>
<feature type="region of interest" description="Disordered" evidence="5">
    <location>
        <begin position="595"/>
        <end position="688"/>
    </location>
</feature>
<feature type="region of interest" description="Disordered" evidence="5">
    <location>
        <begin position="740"/>
        <end position="814"/>
    </location>
</feature>
<feature type="coiled-coil region" evidence="4">
    <location>
        <begin position="213"/>
        <end position="307"/>
    </location>
</feature>
<feature type="coiled-coil region" evidence="4">
    <location>
        <begin position="720"/>
        <end position="755"/>
    </location>
</feature>
<feature type="compositionally biased region" description="Polar residues" evidence="5">
    <location>
        <begin position="133"/>
        <end position="151"/>
    </location>
</feature>
<feature type="compositionally biased region" description="Low complexity" evidence="5">
    <location>
        <begin position="152"/>
        <end position="161"/>
    </location>
</feature>
<feature type="compositionally biased region" description="Basic and acidic residues" evidence="5">
    <location>
        <begin position="259"/>
        <end position="274"/>
    </location>
</feature>
<feature type="compositionally biased region" description="Low complexity" evidence="5">
    <location>
        <begin position="275"/>
        <end position="302"/>
    </location>
</feature>
<feature type="compositionally biased region" description="Basic and acidic residues" evidence="5">
    <location>
        <begin position="313"/>
        <end position="324"/>
    </location>
</feature>
<feature type="compositionally biased region" description="Low complexity" evidence="5">
    <location>
        <begin position="410"/>
        <end position="424"/>
    </location>
</feature>
<feature type="compositionally biased region" description="Polar residues" evidence="5">
    <location>
        <begin position="506"/>
        <end position="543"/>
    </location>
</feature>
<feature type="compositionally biased region" description="Basic and acidic residues" evidence="5">
    <location>
        <begin position="595"/>
        <end position="608"/>
    </location>
</feature>
<feature type="compositionally biased region" description="Basic and acidic residues" evidence="5">
    <location>
        <begin position="644"/>
        <end position="665"/>
    </location>
</feature>
<feature type="compositionally biased region" description="Polar residues" evidence="5">
    <location>
        <begin position="755"/>
        <end position="774"/>
    </location>
</feature>
<feature type="modified residue" description="Phosphoserine" evidence="9">
    <location>
        <position position="122"/>
    </location>
</feature>
<feature type="modified residue" description="Phosphoserine" evidence="3">
    <location>
        <position position="152"/>
    </location>
</feature>
<feature type="modified residue" description="Phosphoserine" evidence="8">
    <location>
        <position position="347"/>
    </location>
</feature>
<feature type="modified residue" description="Phosphoserine" evidence="3">
    <location>
        <position position="472"/>
    </location>
</feature>
<feature type="modified residue" description="Phosphoserine" evidence="9">
    <location>
        <position position="476"/>
    </location>
</feature>
<feature type="modified residue" description="Phosphoserine" evidence="3">
    <location>
        <position position="528"/>
    </location>
</feature>
<feature type="modified residue" description="Phosphothreonine" evidence="3">
    <location>
        <position position="537"/>
    </location>
</feature>
<feature type="modified residue" description="Phosphoserine" evidence="9">
    <location>
        <position position="641"/>
    </location>
</feature>
<feature type="modified residue" description="Phosphoserine" evidence="9">
    <location>
        <position position="730"/>
    </location>
</feature>
<feature type="modified residue" description="Phosphoserine" evidence="3">
    <location>
        <position position="758"/>
    </location>
</feature>
<feature type="modified residue" description="Phosphoserine" evidence="3">
    <location>
        <position position="789"/>
    </location>
</feature>
<feature type="modified residue" description="Phosphoserine" evidence="3">
    <location>
        <position position="796"/>
    </location>
</feature>
<feature type="cross-link" description="Glycyl lysine isopeptide (Lys-Gly) (interchain with G-Cter in SUMO1); alternate" evidence="3">
    <location>
        <position position="174"/>
    </location>
</feature>
<feature type="cross-link" description="Glycyl lysine isopeptide (Lys-Gly) (interchain with G-Cter in SUMO2); alternate" evidence="3">
    <location>
        <position position="174"/>
    </location>
</feature>
<reference key="1">
    <citation type="journal article" date="2004" name="Genome Res.">
        <title>The status, quality, and expansion of the NIH full-length cDNA project: the Mammalian Gene Collection (MGC).</title>
        <authorList>
            <consortium name="The MGC Project Team"/>
        </authorList>
    </citation>
    <scope>NUCLEOTIDE SEQUENCE [LARGE SCALE MRNA]</scope>
    <source>
        <tissue>Kidney</tissue>
    </source>
</reference>
<reference key="2">
    <citation type="journal article" date="2006" name="Proc. Natl. Acad. Sci. U.S.A.">
        <title>Quantitative phosphoproteomics of vasopressin-sensitive renal cells: regulation of aquaporin-2 phosphorylation at two sites.</title>
        <authorList>
            <person name="Hoffert J.D."/>
            <person name="Pisitkun T."/>
            <person name="Wang G."/>
            <person name="Shen R.-F."/>
            <person name="Knepper M.A."/>
        </authorList>
    </citation>
    <scope>PHOSPHORYLATION [LARGE SCALE ANALYSIS] AT SER-347</scope>
    <scope>IDENTIFICATION BY MASS SPECTROMETRY [LARGE SCALE ANALYSIS]</scope>
</reference>
<reference key="3">
    <citation type="journal article" date="2012" name="Nat. Commun.">
        <title>Quantitative maps of protein phosphorylation sites across 14 different rat organs and tissues.</title>
        <authorList>
            <person name="Lundby A."/>
            <person name="Secher A."/>
            <person name="Lage K."/>
            <person name="Nordsborg N.B."/>
            <person name="Dmytriyev A."/>
            <person name="Lundby C."/>
            <person name="Olsen J.V."/>
        </authorList>
    </citation>
    <scope>PHOSPHORYLATION [LARGE SCALE ANALYSIS] AT SER-122; SER-476; SER-641 AND SER-730</scope>
    <scope>IDENTIFICATION BY MASS SPECTROMETRY [LARGE SCALE ANALYSIS]</scope>
</reference>
<comment type="function">
    <text evidence="2">Binds to regulatory subunit (RII) of protein kinase A. May be involved in establishing polarity in signaling systems or in integrating PKA-RII isoforms with downstream effectors to capture, amplify and focus diffuse, trans-cellular signals carried by cAMP. Binds to and modulates the structure of the actin cytoskeleton.</text>
</comment>
<comment type="subcellular location">
    <subcellularLocation>
        <location evidence="2">Apical cell membrane</location>
        <topology evidence="2">Lipid-anchor</topology>
        <topology evidence="2">GPI-like-anchor</topology>
        <orientation evidence="2">Cytoplasmic side</orientation>
    </subcellularLocation>
    <text evidence="2">Accumulates near the inner, apical surface of highly polarized epithelium in tubules of nephrons.</text>
</comment>
<comment type="domain">
    <text evidence="2">The RII-alpha binding site, predicted to form an amphipathic helix, could participate in protein-protein interactions with a complementary surface on the R-subunit dimer.</text>
</comment>
<proteinExistence type="evidence at protein level"/>
<sequence>MEIGVSVAECKSVPGITSTPHSKDHSSPFYSPSHNGLLTDHHESLDNDVAREIQYLDEVLEANCCDSSVDGTYNGISSPEPGAAILVSSLGSPAHSATKVEPIEKASGRQLPPHIELSRSPSDSMAEGERANGHSTDQPQDMLGNSLQAPASPSSSTSSHCSSRDGEFTLTTLKKEAKFELRAFHEDKKPSKLFEEDEHEKEQFCIRKVRPSEEMIELEKERRELIRSQAVKKNPGIAAKWWNPPQKKTIEEQLDEEHLESHRKYKERKEKRAQQEQLQLQQQQQQQLQQLQQLQQQQQQQLSTSQLCTAPAAHEHLDSIEHTKEDVVTEQIDFSAARKQFQQMENSRQTLAKGQSTPRLFSIKPFYKPLGSINSDKPPTILRPATIGGTVEDSSTQAAKEQKALCVSESQSAGAGTGNAATQGKEGPYSEPSKRGPLSKLWAEDGEFTSARAVLTVVKDEDHGILDQFSRSVNVSLTQEELDSGLDELSVRSQDTTVLETLSNDFSMDNISDSGASNETPNALQENSLADFSLPQTPQTDNPSEGREGVSKSFSDHGFYSPSSTLGDSPSVDDPLEYQAGLLVQNAIQQAIAEQVDKAEVHTSKEGSEQQEPGAMVEEAGSQAPGSEKPQGMFAPPQVSSPVQEKRDVLPKILPGEDKTLREKGPSQPPTAVQPSGPVNMKETRPEGGYFSKYSEAAELRSTASLLATQESDVMVGPFKLRSRKQRTLSMIEEEIRAAQEREEELKRQRQVRQSTPSPRAQNAPSLPSRTTCYKTAPGKIEKVKPPPSPTTEGPSLQPDLAPEEAAGAQRPKNLMQTLMEDYETHKSKRRERMDDSSVLEATRVNRRKSALALRWEAGIYANQEEEDNE</sequence>